<gene>
    <name type="primary">ric3</name>
</gene>
<name>RIC3_XENTR</name>
<organism>
    <name type="scientific">Xenopus tropicalis</name>
    <name type="common">Western clawed frog</name>
    <name type="synonym">Silurana tropicalis</name>
    <dbReference type="NCBI Taxonomy" id="8364"/>
    <lineage>
        <taxon>Eukaryota</taxon>
        <taxon>Metazoa</taxon>
        <taxon>Chordata</taxon>
        <taxon>Craniata</taxon>
        <taxon>Vertebrata</taxon>
        <taxon>Euteleostomi</taxon>
        <taxon>Amphibia</taxon>
        <taxon>Batrachia</taxon>
        <taxon>Anura</taxon>
        <taxon>Pipoidea</taxon>
        <taxon>Pipidae</taxon>
        <taxon>Xenopodinae</taxon>
        <taxon>Xenopus</taxon>
        <taxon>Silurana</taxon>
    </lineage>
</organism>
<feature type="signal peptide" evidence="3">
    <location>
        <begin position="1"/>
        <end position="29"/>
    </location>
</feature>
<feature type="chain" id="PRO_0000302733" description="Protein RIC-3">
    <location>
        <begin position="30"/>
        <end position="375"/>
    </location>
</feature>
<feature type="topological domain" description="Lumenal" evidence="3">
    <location>
        <begin position="30"/>
        <end position="90"/>
    </location>
</feature>
<feature type="transmembrane region" description="Helical" evidence="3">
    <location>
        <begin position="91"/>
        <end position="111"/>
    </location>
</feature>
<feature type="topological domain" description="Cytoplasmic" evidence="3">
    <location>
        <begin position="112"/>
        <end position="375"/>
    </location>
</feature>
<feature type="region of interest" description="Disordered" evidence="4">
    <location>
        <begin position="38"/>
        <end position="63"/>
    </location>
</feature>
<feature type="region of interest" description="Disordered" evidence="4">
    <location>
        <begin position="251"/>
        <end position="375"/>
    </location>
</feature>
<feature type="coiled-coil region" evidence="3">
    <location>
        <begin position="135"/>
        <end position="165"/>
    </location>
</feature>
<feature type="compositionally biased region" description="Polar residues" evidence="4">
    <location>
        <begin position="38"/>
        <end position="47"/>
    </location>
</feature>
<feature type="compositionally biased region" description="Polar residues" evidence="4">
    <location>
        <begin position="286"/>
        <end position="296"/>
    </location>
</feature>
<feature type="compositionally biased region" description="Acidic residues" evidence="4">
    <location>
        <begin position="305"/>
        <end position="319"/>
    </location>
</feature>
<feature type="compositionally biased region" description="Basic residues" evidence="4">
    <location>
        <begin position="365"/>
        <end position="375"/>
    </location>
</feature>
<protein>
    <recommendedName>
        <fullName>Protein RIC-3</fullName>
    </recommendedName>
</protein>
<sequence length="375" mass="40774">MALSAVQKVVLFSCLVLCVSLLLPRAYIARGKPAAQEGNTGLFQSSGHHPKPTDGRPGGAHFPRSHMAEAMSKAKGGTGGGGGGGTRPSLVGQIIPIYGFGILLYILYILFKLSSKGKSTKQEPTTQPVANGNLKRKITDYELSQLQDKLKETEEAMEKIISRLGPNSERTDNVSSDEETDLLQRLKEITRVMKEGKILDGISPEKEAEEAPYMEDWNGYPEETYPVYDPSDCKRTQQTILVDCSALNRPSAEQVAEQMGFDEEDDQENGSGNLAKEPDYKDSVGGDQQAQGTISAQGKVVGTGEDIEEDEDEDEDPEVIAENAGFISDSCNEEEDPKESFMDLGNEKGPLGATLGSNRDETGTLRKRNTKGIEY</sequence>
<accession>Q0VFF9</accession>
<proteinExistence type="evidence at transcript level"/>
<comment type="function">
    <text evidence="2">Molecular chaperone which facilitates proper subunit assembly andsurface trafficking of alpha-7 (CHRNA7) and alpha-8 (CHRNA8) nicotinic acetylcholine receptors (By similarity). May also promote functional expression of homomeric serotoninergic 5-HT3 receptors, and of heteromeric acetylcholine receptors (By similarity).</text>
</comment>
<comment type="subcellular location">
    <subcellularLocation>
        <location evidence="1">Endoplasmic reticulum membrane</location>
        <topology evidence="1">Single-pass membrane protein</topology>
    </subcellularLocation>
</comment>
<comment type="similarity">
    <text evidence="5">Belongs to the ric-3 family.</text>
</comment>
<reference key="1">
    <citation type="submission" date="2006-07" db="EMBL/GenBank/DDBJ databases">
        <authorList>
            <consortium name="NIH - Xenopus Gene Collection (XGC) project"/>
        </authorList>
    </citation>
    <scope>NUCLEOTIDE SEQUENCE [LARGE SCALE MRNA]</scope>
    <source>
        <tissue>Brain</tissue>
    </source>
</reference>
<dbReference type="EMBL" id="BC118843">
    <property type="protein sequence ID" value="AAI18844.1"/>
    <property type="molecule type" value="mRNA"/>
</dbReference>
<dbReference type="RefSeq" id="NP_001072241.1">
    <property type="nucleotide sequence ID" value="NM_001078773.1"/>
</dbReference>
<dbReference type="SMR" id="Q0VFF9"/>
<dbReference type="FunCoup" id="Q0VFF9">
    <property type="interactions" value="98"/>
</dbReference>
<dbReference type="STRING" id="8364.ENSXETP00000004420"/>
<dbReference type="PaxDb" id="8364-ENSXETP00000042624"/>
<dbReference type="DNASU" id="779690"/>
<dbReference type="GeneID" id="779690"/>
<dbReference type="KEGG" id="xtr:779690"/>
<dbReference type="AGR" id="Xenbase:XB-GENE-995825"/>
<dbReference type="CTD" id="79608"/>
<dbReference type="Xenbase" id="XB-GENE-995825">
    <property type="gene designation" value="ric3"/>
</dbReference>
<dbReference type="eggNOG" id="ENOG502RZG3">
    <property type="taxonomic scope" value="Eukaryota"/>
</dbReference>
<dbReference type="HOGENOM" id="CLU_062635_1_0_1"/>
<dbReference type="InParanoid" id="Q0VFF9"/>
<dbReference type="OMA" id="HQMPSDG"/>
<dbReference type="OrthoDB" id="9938788at2759"/>
<dbReference type="PhylomeDB" id="Q0VFF9"/>
<dbReference type="TreeFam" id="TF333291"/>
<dbReference type="Proteomes" id="UP000008143">
    <property type="component" value="Chromosome 4"/>
</dbReference>
<dbReference type="Bgee" id="ENSXETG00000019688">
    <property type="expression patterns" value="Expressed in brain and 10 other cell types or tissues"/>
</dbReference>
<dbReference type="GO" id="GO:0005789">
    <property type="term" value="C:endoplasmic reticulum membrane"/>
    <property type="evidence" value="ECO:0007669"/>
    <property type="project" value="UniProtKB-SubCell"/>
</dbReference>
<dbReference type="GO" id="GO:2000010">
    <property type="term" value="P:positive regulation of protein localization to cell surface"/>
    <property type="evidence" value="ECO:0000250"/>
    <property type="project" value="UniProtKB"/>
</dbReference>
<dbReference type="InterPro" id="IPR026160">
    <property type="entry name" value="Ric3"/>
</dbReference>
<dbReference type="InterPro" id="IPR032763">
    <property type="entry name" value="RIC3_N"/>
</dbReference>
<dbReference type="PANTHER" id="PTHR21723:SF3">
    <property type="entry name" value="PROTEIN RIC-3"/>
    <property type="match status" value="1"/>
</dbReference>
<dbReference type="PANTHER" id="PTHR21723">
    <property type="entry name" value="RESISTANCE TO INHIBITORS OF CHOLINESTERASE PROTEIN 3 RIC3"/>
    <property type="match status" value="1"/>
</dbReference>
<dbReference type="Pfam" id="PF15361">
    <property type="entry name" value="RIC3"/>
    <property type="match status" value="1"/>
</dbReference>
<evidence type="ECO:0000250" key="1"/>
<evidence type="ECO:0000250" key="2">
    <source>
        <dbReference type="UniProtKB" id="Q7Z5B4"/>
    </source>
</evidence>
<evidence type="ECO:0000255" key="3"/>
<evidence type="ECO:0000256" key="4">
    <source>
        <dbReference type="SAM" id="MobiDB-lite"/>
    </source>
</evidence>
<evidence type="ECO:0000305" key="5"/>
<keyword id="KW-0143">Chaperone</keyword>
<keyword id="KW-0175">Coiled coil</keyword>
<keyword id="KW-0256">Endoplasmic reticulum</keyword>
<keyword id="KW-0472">Membrane</keyword>
<keyword id="KW-1185">Reference proteome</keyword>
<keyword id="KW-0732">Signal</keyword>
<keyword id="KW-0812">Transmembrane</keyword>
<keyword id="KW-1133">Transmembrane helix</keyword>